<reference key="1">
    <citation type="journal article" date="2011" name="PLoS ONE">
        <title>The genome of Akkermansia muciniphila, a dedicated intestinal mucin degrader, and its use in exploring intestinal metagenomes.</title>
        <authorList>
            <person name="van Passel M.W."/>
            <person name="Kant R."/>
            <person name="Zoetendal E.G."/>
            <person name="Plugge C.M."/>
            <person name="Derrien M."/>
            <person name="Malfatti S.A."/>
            <person name="Chain P.S."/>
            <person name="Woyke T."/>
            <person name="Palva A."/>
            <person name="de Vos W.M."/>
            <person name="Smidt H."/>
        </authorList>
    </citation>
    <scope>NUCLEOTIDE SEQUENCE [LARGE SCALE GENOMIC DNA]</scope>
    <source>
        <strain>ATCC BAA-835 / DSM 22959 / JCM 33894 / BCRC 81048 / CCUG 64013 / CIP 107961 / Muc</strain>
    </source>
</reference>
<accession>B2UMT8</accession>
<evidence type="ECO:0000255" key="1">
    <source>
        <dbReference type="HAMAP-Rule" id="MF_01369"/>
    </source>
</evidence>
<evidence type="ECO:0000305" key="2"/>
<name>RL23_AKKM8</name>
<keyword id="KW-1185">Reference proteome</keyword>
<keyword id="KW-0687">Ribonucleoprotein</keyword>
<keyword id="KW-0689">Ribosomal protein</keyword>
<keyword id="KW-0694">RNA-binding</keyword>
<keyword id="KW-0699">rRNA-binding</keyword>
<protein>
    <recommendedName>
        <fullName evidence="1">Large ribosomal subunit protein uL23</fullName>
    </recommendedName>
    <alternativeName>
        <fullName evidence="2">50S ribosomal protein L23</fullName>
    </alternativeName>
</protein>
<organism>
    <name type="scientific">Akkermansia muciniphila (strain ATCC BAA-835 / DSM 22959 / JCM 33894 / BCRC 81048 / CCUG 64013 / CIP 107961 / Muc)</name>
    <dbReference type="NCBI Taxonomy" id="349741"/>
    <lineage>
        <taxon>Bacteria</taxon>
        <taxon>Pseudomonadati</taxon>
        <taxon>Verrucomicrobiota</taxon>
        <taxon>Verrucomicrobiia</taxon>
        <taxon>Verrucomicrobiales</taxon>
        <taxon>Akkermansiaceae</taxon>
        <taxon>Akkermansia</taxon>
    </lineage>
</organism>
<proteinExistence type="inferred from homology"/>
<dbReference type="EMBL" id="CP001071">
    <property type="protein sequence ID" value="ACD04144.1"/>
    <property type="molecule type" value="Genomic_DNA"/>
</dbReference>
<dbReference type="RefSeq" id="WP_012419359.1">
    <property type="nucleotide sequence ID" value="NZ_CP071807.1"/>
</dbReference>
<dbReference type="SMR" id="B2UMT8"/>
<dbReference type="STRING" id="349741.Amuc_0302"/>
<dbReference type="PaxDb" id="349741-Amuc_0302"/>
<dbReference type="GeneID" id="60879780"/>
<dbReference type="KEGG" id="amu:Amuc_0302"/>
<dbReference type="eggNOG" id="COG0089">
    <property type="taxonomic scope" value="Bacteria"/>
</dbReference>
<dbReference type="HOGENOM" id="CLU_037562_3_1_0"/>
<dbReference type="OrthoDB" id="9793353at2"/>
<dbReference type="BioCyc" id="AMUC349741:G1GBX-344-MONOMER"/>
<dbReference type="Proteomes" id="UP000001031">
    <property type="component" value="Chromosome"/>
</dbReference>
<dbReference type="GO" id="GO:1990904">
    <property type="term" value="C:ribonucleoprotein complex"/>
    <property type="evidence" value="ECO:0007669"/>
    <property type="project" value="UniProtKB-KW"/>
</dbReference>
<dbReference type="GO" id="GO:0005840">
    <property type="term" value="C:ribosome"/>
    <property type="evidence" value="ECO:0007669"/>
    <property type="project" value="UniProtKB-KW"/>
</dbReference>
<dbReference type="GO" id="GO:0019843">
    <property type="term" value="F:rRNA binding"/>
    <property type="evidence" value="ECO:0007669"/>
    <property type="project" value="UniProtKB-UniRule"/>
</dbReference>
<dbReference type="GO" id="GO:0003735">
    <property type="term" value="F:structural constituent of ribosome"/>
    <property type="evidence" value="ECO:0007669"/>
    <property type="project" value="InterPro"/>
</dbReference>
<dbReference type="GO" id="GO:0006412">
    <property type="term" value="P:translation"/>
    <property type="evidence" value="ECO:0007669"/>
    <property type="project" value="UniProtKB-UniRule"/>
</dbReference>
<dbReference type="Gene3D" id="3.30.70.330">
    <property type="match status" value="1"/>
</dbReference>
<dbReference type="HAMAP" id="MF_01369_B">
    <property type="entry name" value="Ribosomal_uL23_B"/>
    <property type="match status" value="1"/>
</dbReference>
<dbReference type="InterPro" id="IPR012677">
    <property type="entry name" value="Nucleotide-bd_a/b_plait_sf"/>
</dbReference>
<dbReference type="InterPro" id="IPR013025">
    <property type="entry name" value="Ribosomal_uL23-like"/>
</dbReference>
<dbReference type="InterPro" id="IPR012678">
    <property type="entry name" value="Ribosomal_uL23/eL15/eS24_sf"/>
</dbReference>
<dbReference type="InterPro" id="IPR001014">
    <property type="entry name" value="Ribosomal_uL23_CS"/>
</dbReference>
<dbReference type="NCBIfam" id="NF004359">
    <property type="entry name" value="PRK05738.1-3"/>
    <property type="match status" value="1"/>
</dbReference>
<dbReference type="NCBIfam" id="NF004363">
    <property type="entry name" value="PRK05738.2-4"/>
    <property type="match status" value="1"/>
</dbReference>
<dbReference type="PANTHER" id="PTHR11620">
    <property type="entry name" value="60S RIBOSOMAL PROTEIN L23A"/>
    <property type="match status" value="1"/>
</dbReference>
<dbReference type="Pfam" id="PF00276">
    <property type="entry name" value="Ribosomal_L23"/>
    <property type="match status" value="1"/>
</dbReference>
<dbReference type="SUPFAM" id="SSF54189">
    <property type="entry name" value="Ribosomal proteins S24e, L23 and L15e"/>
    <property type="match status" value="1"/>
</dbReference>
<dbReference type="PROSITE" id="PS00050">
    <property type="entry name" value="RIBOSOMAL_L23"/>
    <property type="match status" value="1"/>
</dbReference>
<sequence length="94" mass="10696">MKDIYQVIKKVRISEKATMLQETTGELVFEVDRDANKIEIKKAVEVAFGKKVASVRTANYDGKLKRQRRSDAGRTAHWKKAYVKLANGETLDLV</sequence>
<comment type="function">
    <text evidence="1">One of the early assembly proteins it binds 23S rRNA. One of the proteins that surrounds the polypeptide exit tunnel on the outside of the ribosome. Forms the main docking site for trigger factor binding to the ribosome.</text>
</comment>
<comment type="subunit">
    <text evidence="1">Part of the 50S ribosomal subunit. Contacts protein L29, and trigger factor when it is bound to the ribosome.</text>
</comment>
<comment type="similarity">
    <text evidence="1">Belongs to the universal ribosomal protein uL23 family.</text>
</comment>
<gene>
    <name evidence="1" type="primary">rplW</name>
    <name type="ordered locus">Amuc_0302</name>
</gene>
<feature type="chain" id="PRO_1000144522" description="Large ribosomal subunit protein uL23">
    <location>
        <begin position="1"/>
        <end position="94"/>
    </location>
</feature>